<evidence type="ECO:0000250" key="1">
    <source>
        <dbReference type="UniProtKB" id="P62737"/>
    </source>
</evidence>
<evidence type="ECO:0000250" key="2">
    <source>
        <dbReference type="UniProtKB" id="P62739"/>
    </source>
</evidence>
<evidence type="ECO:0000250" key="3">
    <source>
        <dbReference type="UniProtKB" id="P68032"/>
    </source>
</evidence>
<evidence type="ECO:0000250" key="4">
    <source>
        <dbReference type="UniProtKB" id="P68033"/>
    </source>
</evidence>
<evidence type="ECO:0000250" key="5">
    <source>
        <dbReference type="UniProtKB" id="P68135"/>
    </source>
</evidence>
<evidence type="ECO:0000250" key="6">
    <source>
        <dbReference type="UniProtKB" id="P68137"/>
    </source>
</evidence>
<evidence type="ECO:0000305" key="7"/>
<reference key="1">
    <citation type="journal article" date="1997" name="DNA Seq.">
        <title>Nucleotide and deduced amino acid sequences of Biomphalaria glabrata actin cDNA.</title>
        <authorList>
            <person name="Lardans V."/>
            <person name="Ringaut V."/>
            <person name="Duclermortier P."/>
            <person name="Cadoret J.P."/>
            <person name="Dissous C."/>
        </authorList>
    </citation>
    <scope>NUCLEOTIDE SEQUENCE [MRNA]</scope>
    <source>
        <strain>Albino</strain>
    </source>
</reference>
<reference key="2">
    <citation type="journal article" date="2002" name="J. Molluscan Stud.">
        <title>Comparative study of cytoplasmic actin DNA from six species of Planorbidae (Gastropoda: Basommatophora).</title>
        <authorList>
            <person name="Adema C.M."/>
        </authorList>
    </citation>
    <scope>NUCLEOTIDE SEQUENCE</scope>
    <source>
        <strain>M-line</strain>
    </source>
</reference>
<dbReference type="EC" id="3.6.4.-" evidence="6"/>
<dbReference type="EMBL" id="Z72387">
    <property type="protein sequence ID" value="CAA96527.1"/>
    <property type="molecule type" value="mRNA"/>
</dbReference>
<dbReference type="EMBL" id="U53348">
    <property type="protein sequence ID" value="AAB49413.1"/>
    <property type="molecule type" value="mRNA"/>
</dbReference>
<dbReference type="EMBL" id="AF329436">
    <property type="protein sequence ID" value="AAK68710.1"/>
    <property type="molecule type" value="Genomic_DNA"/>
</dbReference>
<dbReference type="SMR" id="P92179"/>
<dbReference type="STRING" id="6526.P92179"/>
<dbReference type="VEuPathDB" id="VectorBase:BGLAX_050742"/>
<dbReference type="VEuPathDB" id="VectorBase:BGLB003971"/>
<dbReference type="Proteomes" id="UP000076420">
    <property type="component" value="Unassembled WGS sequence"/>
</dbReference>
<dbReference type="Proteomes" id="UP001165740">
    <property type="component" value="Unplaced"/>
</dbReference>
<dbReference type="GO" id="GO:0005737">
    <property type="term" value="C:cytoplasm"/>
    <property type="evidence" value="ECO:0007669"/>
    <property type="project" value="UniProtKB-KW"/>
</dbReference>
<dbReference type="GO" id="GO:0005856">
    <property type="term" value="C:cytoskeleton"/>
    <property type="evidence" value="ECO:0007669"/>
    <property type="project" value="UniProtKB-SubCell"/>
</dbReference>
<dbReference type="GO" id="GO:0005524">
    <property type="term" value="F:ATP binding"/>
    <property type="evidence" value="ECO:0007669"/>
    <property type="project" value="UniProtKB-KW"/>
</dbReference>
<dbReference type="GO" id="GO:0016787">
    <property type="term" value="F:hydrolase activity"/>
    <property type="evidence" value="ECO:0007669"/>
    <property type="project" value="UniProtKB-KW"/>
</dbReference>
<dbReference type="CDD" id="cd10224">
    <property type="entry name" value="ASKHA_NBD_actin"/>
    <property type="match status" value="1"/>
</dbReference>
<dbReference type="FunFam" id="3.30.420.40:FF:000131">
    <property type="entry name" value="Actin, alpha skeletal muscle"/>
    <property type="match status" value="1"/>
</dbReference>
<dbReference type="FunFam" id="3.30.420.40:FF:000291">
    <property type="entry name" value="Actin, alpha skeletal muscle"/>
    <property type="match status" value="1"/>
</dbReference>
<dbReference type="FunFam" id="3.90.640.10:FF:000047">
    <property type="entry name" value="Actin, alpha skeletal muscle"/>
    <property type="match status" value="1"/>
</dbReference>
<dbReference type="FunFam" id="3.30.420.40:FF:000058">
    <property type="entry name" value="Putative actin-related protein 5"/>
    <property type="match status" value="1"/>
</dbReference>
<dbReference type="Gene3D" id="3.30.420.40">
    <property type="match status" value="2"/>
</dbReference>
<dbReference type="Gene3D" id="3.90.640.10">
    <property type="entry name" value="Actin, Chain A, domain 4"/>
    <property type="match status" value="1"/>
</dbReference>
<dbReference type="InterPro" id="IPR004000">
    <property type="entry name" value="Actin"/>
</dbReference>
<dbReference type="InterPro" id="IPR020902">
    <property type="entry name" value="Actin/actin-like_CS"/>
</dbReference>
<dbReference type="InterPro" id="IPR004001">
    <property type="entry name" value="Actin_CS"/>
</dbReference>
<dbReference type="InterPro" id="IPR043129">
    <property type="entry name" value="ATPase_NBD"/>
</dbReference>
<dbReference type="PANTHER" id="PTHR11937">
    <property type="entry name" value="ACTIN"/>
    <property type="match status" value="1"/>
</dbReference>
<dbReference type="Pfam" id="PF00022">
    <property type="entry name" value="Actin"/>
    <property type="match status" value="1"/>
</dbReference>
<dbReference type="PRINTS" id="PR00190">
    <property type="entry name" value="ACTIN"/>
</dbReference>
<dbReference type="SMART" id="SM00268">
    <property type="entry name" value="ACTIN"/>
    <property type="match status" value="1"/>
</dbReference>
<dbReference type="SUPFAM" id="SSF53067">
    <property type="entry name" value="Actin-like ATPase domain"/>
    <property type="match status" value="2"/>
</dbReference>
<dbReference type="PROSITE" id="PS00406">
    <property type="entry name" value="ACTINS_1"/>
    <property type="match status" value="1"/>
</dbReference>
<dbReference type="PROSITE" id="PS00432">
    <property type="entry name" value="ACTINS_2"/>
    <property type="match status" value="1"/>
</dbReference>
<dbReference type="PROSITE" id="PS01132">
    <property type="entry name" value="ACTINS_ACT_LIKE"/>
    <property type="match status" value="1"/>
</dbReference>
<sequence>MCDEDVAALVVDNGSGMCKAGFAGDDAPRAVFPSIVGRPRHQGVMVGMGQKDSYVGDEAQSKRGILTLKYPIEHGIVTNWDDMEKIWHHTFYNELRVAPEEHPVLLTEAPLNPKANREKMTQIMFETFNTPAMYVAIQAVLSLYASGRTTGIVMDSGDGVTHTVPIYEGYALPHAIMRLDLAGRDLTDYLMKILTERGYSFTTTAEREIVRDIKEKLCYVALDFEQEMQTASTSSSLEKSYELPDGQVITIGNERFRCPEATFQPSFLGMEAAGIHETTYNSIMKCDVDIRKDLYANTVLSGGSTMFPGIADRMQKEITALAPPTMKIKIIAPPERKYSVWIGGSILASLSTFQQMWISKQEYDESGPSIVHRKCF</sequence>
<protein>
    <recommendedName>
        <fullName>Actin, cytoplasmic</fullName>
        <ecNumber evidence="6">3.6.4.-</ecNumber>
    </recommendedName>
    <component>
        <recommendedName>
            <fullName>Actin, cytoplasmic, intermediate form</fullName>
        </recommendedName>
    </component>
</protein>
<organism>
    <name type="scientific">Biomphalaria glabrata</name>
    <name type="common">Bloodfluke planorb</name>
    <name type="synonym">Freshwater snail</name>
    <dbReference type="NCBI Taxonomy" id="6526"/>
    <lineage>
        <taxon>Eukaryota</taxon>
        <taxon>Metazoa</taxon>
        <taxon>Spiralia</taxon>
        <taxon>Lophotrochozoa</taxon>
        <taxon>Mollusca</taxon>
        <taxon>Gastropoda</taxon>
        <taxon>Heterobranchia</taxon>
        <taxon>Euthyneura</taxon>
        <taxon>Panpulmonata</taxon>
        <taxon>Hygrophila</taxon>
        <taxon>Lymnaeoidea</taxon>
        <taxon>Planorbidae</taxon>
        <taxon>Biomphalaria</taxon>
    </lineage>
</organism>
<name>ACTC_BIOGL</name>
<keyword id="KW-0007">Acetylation</keyword>
<keyword id="KW-0067">ATP-binding</keyword>
<keyword id="KW-0963">Cytoplasm</keyword>
<keyword id="KW-0206">Cytoskeleton</keyword>
<keyword id="KW-0378">Hydrolase</keyword>
<keyword id="KW-0488">Methylation</keyword>
<keyword id="KW-0547">Nucleotide-binding</keyword>
<keyword id="KW-0558">Oxidation</keyword>
<keyword id="KW-1185">Reference proteome</keyword>
<proteinExistence type="evidence at transcript level"/>
<feature type="initiator methionine" description="Removed">
    <location>
        <position position="1"/>
    </location>
</feature>
<feature type="chain" id="PRO_0000443006" description="Actin, cytoplasmic, intermediate form" evidence="1">
    <location>
        <begin position="2"/>
        <end position="376"/>
    </location>
</feature>
<feature type="chain" id="PRO_0000000625" description="Actin, cytoplasmic" evidence="5">
    <location>
        <begin position="3"/>
        <end position="376"/>
    </location>
</feature>
<feature type="modified residue" description="N-acetylcysteine; in intermediate form" evidence="1">
    <location>
        <position position="2"/>
    </location>
</feature>
<feature type="modified residue" description="N-acetylaspartate; in Actin, cytoplasmic" evidence="5">
    <location>
        <position position="3"/>
    </location>
</feature>
<feature type="modified residue" description="Methionine (R)-sulfoxide" evidence="4">
    <location>
        <position position="45"/>
    </location>
</feature>
<feature type="modified residue" description="Methionine (R)-sulfoxide" evidence="4">
    <location>
        <position position="48"/>
    </location>
</feature>
<feature type="modified residue" description="Tele-methylhistidine" evidence="2">
    <location>
        <position position="74"/>
    </location>
</feature>
<feature type="modified residue" description="N6-methyllysine" evidence="3">
    <location>
        <position position="85"/>
    </location>
</feature>
<feature type="sequence conflict" description="In Ref. 1; CAA96527/AAB49413." evidence="7" ref="1">
    <original>AA</original>
    <variation>VV</variation>
    <location>
        <begin position="272"/>
        <end position="273"/>
    </location>
</feature>
<comment type="function">
    <text>Actins are highly conserved proteins that are involved in various types of cell motility and are ubiquitously expressed in all eukaryotic cells.</text>
</comment>
<comment type="catalytic activity">
    <reaction evidence="6">
        <text>ATP + H2O = ADP + phosphate + H(+)</text>
        <dbReference type="Rhea" id="RHEA:13065"/>
        <dbReference type="ChEBI" id="CHEBI:15377"/>
        <dbReference type="ChEBI" id="CHEBI:15378"/>
        <dbReference type="ChEBI" id="CHEBI:30616"/>
        <dbReference type="ChEBI" id="CHEBI:43474"/>
        <dbReference type="ChEBI" id="CHEBI:456216"/>
    </reaction>
</comment>
<comment type="subcellular location">
    <subcellularLocation>
        <location>Cytoplasm</location>
        <location>Cytoskeleton</location>
    </subcellularLocation>
</comment>
<comment type="PTM">
    <text evidence="4">Oxidation of Met-45 and Met-48 by MICALs (MICAL1, MICAL2 or MICAL3) to form methionine sulfoxide promotes actin filament depolymerization. MICAL1 and MICAL2 produce the (R)-S-oxide form. The (R)-S-oxide form is reverted by MSRB1 and MSRB2, which promotes actin repolymerization.</text>
</comment>
<comment type="PTM">
    <text evidence="3">Monomethylation at Lys-85 (K85me1) regulates actin-myosin interaction and actomyosin-dependent processes. Demethylation by ALKBH4 is required for maintaining actomyosin dynamics supporting normal cleavage furrow ingression during cytokinesis and cell migration.</text>
</comment>
<comment type="similarity">
    <text evidence="7">Belongs to the actin family.</text>
</comment>
<accession>P92179</accession>
<accession>Q964E4</accession>